<keyword id="KW-0963">Cytoplasm</keyword>
<keyword id="KW-0472">Membrane</keyword>
<keyword id="KW-0597">Phosphoprotein</keyword>
<keyword id="KW-1185">Reference proteome</keyword>
<dbReference type="EMBL" id="AF089817">
    <property type="protein sequence ID" value="AAC67549.1"/>
    <property type="molecule type" value="mRNA"/>
</dbReference>
<dbReference type="EMBL" id="AF032120">
    <property type="protein sequence ID" value="AAC69268.1"/>
    <property type="molecule type" value="mRNA"/>
</dbReference>
<dbReference type="EMBL" id="BC070505">
    <property type="protein sequence ID" value="AAH70505.1"/>
    <property type="molecule type" value="mRNA"/>
</dbReference>
<dbReference type="RefSeq" id="NP_445793.1">
    <property type="nucleotide sequence ID" value="NM_053341.3"/>
</dbReference>
<dbReference type="RefSeq" id="XP_017456861.1">
    <property type="nucleotide sequence ID" value="XM_017601372.3"/>
</dbReference>
<dbReference type="RefSeq" id="XP_038953963.1">
    <property type="nucleotide sequence ID" value="XM_039098035.2"/>
</dbReference>
<dbReference type="SMR" id="Q9Z254"/>
<dbReference type="BioGRID" id="249850">
    <property type="interactions" value="4"/>
</dbReference>
<dbReference type="FunCoup" id="Q9Z254">
    <property type="interactions" value="2686"/>
</dbReference>
<dbReference type="IntAct" id="Q9Z254">
    <property type="interactions" value="4"/>
</dbReference>
<dbReference type="MINT" id="Q9Z254"/>
<dbReference type="STRING" id="10116.ENSRNOP00000005374"/>
<dbReference type="iPTMnet" id="Q9Z254"/>
<dbReference type="PhosphoSitePlus" id="Q9Z254"/>
<dbReference type="jPOST" id="Q9Z254"/>
<dbReference type="PaxDb" id="10116-ENSRNOP00000005374"/>
<dbReference type="Ensembl" id="ENSRNOT00000005374.6">
    <property type="protein sequence ID" value="ENSRNOP00000005374.3"/>
    <property type="gene ID" value="ENSRNOG00000003864.6"/>
</dbReference>
<dbReference type="GeneID" id="83823"/>
<dbReference type="KEGG" id="rno:83823"/>
<dbReference type="AGR" id="RGD:68338"/>
<dbReference type="CTD" id="10755"/>
<dbReference type="RGD" id="68338">
    <property type="gene designation" value="Gipc1"/>
</dbReference>
<dbReference type="eggNOG" id="KOG3938">
    <property type="taxonomic scope" value="Eukaryota"/>
</dbReference>
<dbReference type="GeneTree" id="ENSGT00390000003420"/>
<dbReference type="HOGENOM" id="CLU_044527_1_0_1"/>
<dbReference type="InParanoid" id="Q9Z254"/>
<dbReference type="OrthoDB" id="74700at9989"/>
<dbReference type="PhylomeDB" id="Q9Z254"/>
<dbReference type="TreeFam" id="TF313878"/>
<dbReference type="Reactome" id="R-RNO-190370">
    <property type="pathway name" value="FGFR1b ligand binding and activation"/>
</dbReference>
<dbReference type="Reactome" id="R-RNO-190373">
    <property type="pathway name" value="FGFR1c ligand binding and activation"/>
</dbReference>
<dbReference type="Reactome" id="R-RNO-9839389">
    <property type="pathway name" value="TGFBR3 regulates TGF-beta signaling"/>
</dbReference>
<dbReference type="Reactome" id="R-RNO-9839397">
    <property type="pathway name" value="TGFBR3 regulates FGF2 signaling"/>
</dbReference>
<dbReference type="PRO" id="PR:Q9Z254"/>
<dbReference type="Proteomes" id="UP000002494">
    <property type="component" value="Chromosome 19"/>
</dbReference>
<dbReference type="Bgee" id="ENSRNOG00000003864">
    <property type="expression patterns" value="Expressed in esophagus and 20 other cell types or tissues"/>
</dbReference>
<dbReference type="GO" id="GO:0005903">
    <property type="term" value="C:brush border"/>
    <property type="evidence" value="ECO:0000314"/>
    <property type="project" value="RGD"/>
</dbReference>
<dbReference type="GO" id="GO:0005938">
    <property type="term" value="C:cell cortex"/>
    <property type="evidence" value="ECO:0000266"/>
    <property type="project" value="RGD"/>
</dbReference>
<dbReference type="GO" id="GO:0005737">
    <property type="term" value="C:cytoplasm"/>
    <property type="evidence" value="ECO:0000266"/>
    <property type="project" value="RGD"/>
</dbReference>
<dbReference type="GO" id="GO:0031410">
    <property type="term" value="C:cytoplasmic vesicle"/>
    <property type="evidence" value="ECO:0000266"/>
    <property type="project" value="RGD"/>
</dbReference>
<dbReference type="GO" id="GO:0005829">
    <property type="term" value="C:cytosol"/>
    <property type="evidence" value="ECO:0000266"/>
    <property type="project" value="RGD"/>
</dbReference>
<dbReference type="GO" id="GO:0043198">
    <property type="term" value="C:dendritic shaft"/>
    <property type="evidence" value="ECO:0000266"/>
    <property type="project" value="RGD"/>
</dbReference>
<dbReference type="GO" id="GO:0043197">
    <property type="term" value="C:dendritic spine"/>
    <property type="evidence" value="ECO:0000266"/>
    <property type="project" value="RGD"/>
</dbReference>
<dbReference type="GO" id="GO:0030139">
    <property type="term" value="C:endocytic vesicle"/>
    <property type="evidence" value="ECO:0000314"/>
    <property type="project" value="RGD"/>
</dbReference>
<dbReference type="GO" id="GO:0098978">
    <property type="term" value="C:glutamatergic synapse"/>
    <property type="evidence" value="ECO:0000266"/>
    <property type="project" value="RGD"/>
</dbReference>
<dbReference type="GO" id="GO:0016020">
    <property type="term" value="C:membrane"/>
    <property type="evidence" value="ECO:0000266"/>
    <property type="project" value="RGD"/>
</dbReference>
<dbReference type="GO" id="GO:0098794">
    <property type="term" value="C:postsynapse"/>
    <property type="evidence" value="ECO:0000314"/>
    <property type="project" value="SynGO"/>
</dbReference>
<dbReference type="GO" id="GO:0098793">
    <property type="term" value="C:presynapse"/>
    <property type="evidence" value="ECO:0000314"/>
    <property type="project" value="SynGO"/>
</dbReference>
<dbReference type="GO" id="GO:0098685">
    <property type="term" value="C:Schaffer collateral - CA1 synapse"/>
    <property type="evidence" value="ECO:0000314"/>
    <property type="project" value="SynGO"/>
</dbReference>
<dbReference type="GO" id="GO:0008021">
    <property type="term" value="C:synaptic vesicle"/>
    <property type="evidence" value="ECO:0000266"/>
    <property type="project" value="RGD"/>
</dbReference>
<dbReference type="GO" id="GO:0012506">
    <property type="term" value="C:vesicle membrane"/>
    <property type="evidence" value="ECO:0000266"/>
    <property type="project" value="RGD"/>
</dbReference>
<dbReference type="GO" id="GO:0003779">
    <property type="term" value="F:actin binding"/>
    <property type="evidence" value="ECO:0000266"/>
    <property type="project" value="RGD"/>
</dbReference>
<dbReference type="GO" id="GO:0042802">
    <property type="term" value="F:identical protein binding"/>
    <property type="evidence" value="ECO:0000266"/>
    <property type="project" value="RGD"/>
</dbReference>
<dbReference type="GO" id="GO:0017022">
    <property type="term" value="F:myosin binding"/>
    <property type="evidence" value="ECO:0000266"/>
    <property type="project" value="RGD"/>
</dbReference>
<dbReference type="GO" id="GO:0030165">
    <property type="term" value="F:PDZ domain binding"/>
    <property type="evidence" value="ECO:0000353"/>
    <property type="project" value="RGD"/>
</dbReference>
<dbReference type="GO" id="GO:0005102">
    <property type="term" value="F:signaling receptor binding"/>
    <property type="evidence" value="ECO:0000266"/>
    <property type="project" value="RGD"/>
</dbReference>
<dbReference type="GO" id="GO:0098761">
    <property type="term" value="P:cellular response to interleukin-7"/>
    <property type="evidence" value="ECO:0000266"/>
    <property type="project" value="RGD"/>
</dbReference>
<dbReference type="GO" id="GO:0007268">
    <property type="term" value="P:chemical synaptic transmission"/>
    <property type="evidence" value="ECO:0000266"/>
    <property type="project" value="RGD"/>
</dbReference>
<dbReference type="GO" id="GO:0043542">
    <property type="term" value="P:endothelial cell migration"/>
    <property type="evidence" value="ECO:0000266"/>
    <property type="project" value="RGD"/>
</dbReference>
<dbReference type="GO" id="GO:0014047">
    <property type="term" value="P:glutamate secretion"/>
    <property type="evidence" value="ECO:0000266"/>
    <property type="project" value="RGD"/>
</dbReference>
<dbReference type="GO" id="GO:0032435">
    <property type="term" value="P:negative regulation of proteasomal ubiquitin-dependent protein catabolic process"/>
    <property type="evidence" value="ECO:0000266"/>
    <property type="project" value="RGD"/>
</dbReference>
<dbReference type="GO" id="GO:0032467">
    <property type="term" value="P:positive regulation of cytokinesis"/>
    <property type="evidence" value="ECO:0000266"/>
    <property type="project" value="RGD"/>
</dbReference>
<dbReference type="GO" id="GO:0048023">
    <property type="term" value="P:positive regulation of melanin biosynthetic process"/>
    <property type="evidence" value="ECO:0000250"/>
    <property type="project" value="UniProtKB"/>
</dbReference>
<dbReference type="GO" id="GO:0030511">
    <property type="term" value="P:positive regulation of transforming growth factor beta receptor signaling pathway"/>
    <property type="evidence" value="ECO:0000266"/>
    <property type="project" value="RGD"/>
</dbReference>
<dbReference type="GO" id="GO:0099171">
    <property type="term" value="P:presynaptic modulation of chemical synaptic transmission"/>
    <property type="evidence" value="ECO:0000266"/>
    <property type="project" value="RGD"/>
</dbReference>
<dbReference type="GO" id="GO:0006605">
    <property type="term" value="P:protein targeting"/>
    <property type="evidence" value="ECO:0000266"/>
    <property type="project" value="RGD"/>
</dbReference>
<dbReference type="GO" id="GO:0031647">
    <property type="term" value="P:regulation of protein stability"/>
    <property type="evidence" value="ECO:0000266"/>
    <property type="project" value="RGD"/>
</dbReference>
<dbReference type="GO" id="GO:0048167">
    <property type="term" value="P:regulation of synaptic plasticity"/>
    <property type="evidence" value="ECO:0000266"/>
    <property type="project" value="RGD"/>
</dbReference>
<dbReference type="CDD" id="cd21180">
    <property type="entry name" value="GH2_GIPC"/>
    <property type="match status" value="1"/>
</dbReference>
<dbReference type="CDD" id="cd23077">
    <property type="entry name" value="PDZ_GIPC1"/>
    <property type="match status" value="1"/>
</dbReference>
<dbReference type="FunFam" id="2.30.42.10:FF:000097">
    <property type="entry name" value="PDZ domain-containing protein GIPC1 isoform 1"/>
    <property type="match status" value="1"/>
</dbReference>
<dbReference type="Gene3D" id="2.30.42.10">
    <property type="match status" value="1"/>
</dbReference>
<dbReference type="InterPro" id="IPR055349">
    <property type="entry name" value="GH2_GIPC"/>
</dbReference>
<dbReference type="InterPro" id="IPR056814">
    <property type="entry name" value="GIPC1-3_GH1"/>
</dbReference>
<dbReference type="InterPro" id="IPR017379">
    <property type="entry name" value="GIPC1/2/3"/>
</dbReference>
<dbReference type="InterPro" id="IPR001478">
    <property type="entry name" value="PDZ"/>
</dbReference>
<dbReference type="InterPro" id="IPR036034">
    <property type="entry name" value="PDZ_sf"/>
</dbReference>
<dbReference type="PANTHER" id="PTHR12259:SF4">
    <property type="entry name" value="PDZ DOMAIN-CONTAINING PROTEIN GIPC1"/>
    <property type="match status" value="1"/>
</dbReference>
<dbReference type="PANTHER" id="PTHR12259">
    <property type="entry name" value="RGS-GAIP INTERACTING PROTEIN GIPC"/>
    <property type="match status" value="1"/>
</dbReference>
<dbReference type="Pfam" id="PF25083">
    <property type="entry name" value="GIPC1_GH1"/>
    <property type="match status" value="1"/>
</dbReference>
<dbReference type="Pfam" id="PF25082">
    <property type="entry name" value="GIPC1_GH2"/>
    <property type="match status" value="1"/>
</dbReference>
<dbReference type="Pfam" id="PF00595">
    <property type="entry name" value="PDZ"/>
    <property type="match status" value="1"/>
</dbReference>
<dbReference type="PIRSF" id="PIRSF038083">
    <property type="entry name" value="UCP038083_GIPC"/>
    <property type="match status" value="1"/>
</dbReference>
<dbReference type="SMART" id="SM00228">
    <property type="entry name" value="PDZ"/>
    <property type="match status" value="1"/>
</dbReference>
<dbReference type="SUPFAM" id="SSF50156">
    <property type="entry name" value="PDZ domain-like"/>
    <property type="match status" value="1"/>
</dbReference>
<dbReference type="PROSITE" id="PS50106">
    <property type="entry name" value="PDZ"/>
    <property type="match status" value="1"/>
</dbReference>
<organism>
    <name type="scientific">Rattus norvegicus</name>
    <name type="common">Rat</name>
    <dbReference type="NCBI Taxonomy" id="10116"/>
    <lineage>
        <taxon>Eukaryota</taxon>
        <taxon>Metazoa</taxon>
        <taxon>Chordata</taxon>
        <taxon>Craniata</taxon>
        <taxon>Vertebrata</taxon>
        <taxon>Euteleostomi</taxon>
        <taxon>Mammalia</taxon>
        <taxon>Eutheria</taxon>
        <taxon>Euarchontoglires</taxon>
        <taxon>Glires</taxon>
        <taxon>Rodentia</taxon>
        <taxon>Myomorpha</taxon>
        <taxon>Muroidea</taxon>
        <taxon>Muridae</taxon>
        <taxon>Murinae</taxon>
        <taxon>Rattus</taxon>
    </lineage>
</organism>
<gene>
    <name type="primary">Gipc1</name>
    <name type="synonym">Gipc</name>
    <name type="synonym">Rgs19ip1</name>
</gene>
<comment type="function">
    <text evidence="1">May be involved in G protein-linked signaling.</text>
</comment>
<comment type="subunit">
    <text evidence="1 5 6 7">Interacts with SDC4/syndecan-4 and SEMA4C/semaphorin-4C (By similarity). Interacts with RGS19 (C-terminus), GLUT1 (C-terminus), ACTN1, KIF1B, MYO6 and PLEKHG5.</text>
</comment>
<comment type="interaction">
    <interactant intactId="EBI-991162">
        <id>Q9Z254</id>
    </interactant>
    <interactant intactId="EBI-9079908">
        <id>Q6RFZ7</id>
        <label>Plekhg5</label>
    </interactant>
    <organismsDiffer>false</organismsDiffer>
    <experiments>3</experiments>
</comment>
<comment type="subcellular location">
    <subcellularLocation>
        <location evidence="2">Cytoplasm</location>
    </subcellularLocation>
    <subcellularLocation>
        <location evidence="2">Membrane</location>
        <topology evidence="1">Peripheral membrane protein</topology>
    </subcellularLocation>
</comment>
<comment type="tissue specificity">
    <text>Widely expressed.</text>
</comment>
<comment type="similarity">
    <text evidence="8">Belongs to the GIPC family.</text>
</comment>
<accession>Q9Z254</accession>
<accession>Q6GR70</accession>
<accession>Q9QUQ4</accession>
<feature type="chain" id="PRO_0000087494" description="PDZ domain-containing protein GIPC1">
    <location>
        <begin position="1"/>
        <end position="333"/>
    </location>
</feature>
<feature type="domain" description="PDZ" evidence="3">
    <location>
        <begin position="133"/>
        <end position="213"/>
    </location>
</feature>
<feature type="region of interest" description="Disordered" evidence="4">
    <location>
        <begin position="1"/>
        <end position="55"/>
    </location>
</feature>
<feature type="region of interest" description="Disordered" evidence="4">
    <location>
        <begin position="221"/>
        <end position="244"/>
    </location>
</feature>
<feature type="compositionally biased region" description="Basic residues" evidence="4">
    <location>
        <begin position="1"/>
        <end position="11"/>
    </location>
</feature>
<feature type="compositionally biased region" description="Gly residues" evidence="4">
    <location>
        <begin position="27"/>
        <end position="40"/>
    </location>
</feature>
<feature type="compositionally biased region" description="Gly residues" evidence="4">
    <location>
        <begin position="228"/>
        <end position="240"/>
    </location>
</feature>
<feature type="modified residue" description="Phosphoserine" evidence="2">
    <location>
        <position position="68"/>
    </location>
</feature>
<feature type="modified residue" description="Phosphoserine" evidence="2">
    <location>
        <position position="222"/>
    </location>
</feature>
<feature type="modified residue" description="Phosphoserine" evidence="2">
    <location>
        <position position="225"/>
    </location>
</feature>
<feature type="modified residue" description="Phosphoserine" evidence="2">
    <location>
        <position position="232"/>
    </location>
</feature>
<feature type="modified residue" description="Phosphothreonine" evidence="2">
    <location>
        <position position="242"/>
    </location>
</feature>
<feature type="modified residue" description="Phosphoserine" evidence="2">
    <location>
        <position position="247"/>
    </location>
</feature>
<feature type="sequence conflict" description="In Ref. 1; AAC67549." evidence="8" ref="1">
    <original>V</original>
    <variation>I</variation>
    <location>
        <position position="253"/>
    </location>
</feature>
<feature type="sequence conflict" description="In Ref. 1; AAC67549." evidence="8" ref="1">
    <original>D</original>
    <variation>E</variation>
    <location>
        <position position="270"/>
    </location>
</feature>
<reference key="1">
    <citation type="journal article" date="1998" name="Proc. Natl. Acad. Sci. U.S.A.">
        <title>GIPC, a PDZ domain containing protein, interacts specifically with the C-terminus of RGS-GAIP.</title>
        <authorList>
            <person name="De Vries L."/>
            <person name="Lou X."/>
            <person name="Zhao G."/>
            <person name="Zheng B."/>
            <person name="Farquhar M.G."/>
        </authorList>
    </citation>
    <scope>NUCLEOTIDE SEQUENCE [MRNA]</scope>
    <scope>INTERACTION WITH RGS19</scope>
    <source>
        <tissue>Pituitary</tissue>
    </source>
</reference>
<reference key="2">
    <citation type="journal article" date="1999" name="Mol. Biol. Cell">
        <title>Protein interactions with the glucose transporter binding protein GLUT1CBP that provide a link between GLUT1 and the cytoskeleton.</title>
        <authorList>
            <person name="Bunn R.C."/>
            <person name="Jensen M.A."/>
            <person name="Reed B.C."/>
        </authorList>
    </citation>
    <scope>NUCLEOTIDE SEQUENCE [MRNA]</scope>
    <scope>INTERACTION WITH ACTN1; GLUT1; KIF1B AND MYO6</scope>
    <source>
        <strain>Fischer 344</strain>
        <tissue>Brain</tissue>
    </source>
</reference>
<reference key="3">
    <citation type="journal article" date="2004" name="Genome Res.">
        <title>The status, quality, and expansion of the NIH full-length cDNA project: the Mammalian Gene Collection (MGC).</title>
        <authorList>
            <consortium name="The MGC Project Team"/>
        </authorList>
    </citation>
    <scope>NUCLEOTIDE SEQUENCE [LARGE SCALE MRNA]</scope>
    <source>
        <tissue>Lung</tissue>
    </source>
</reference>
<reference key="4">
    <citation type="journal article" date="2006" name="Mol. Biol. Cell">
        <title>A PDZ-binding motif as a critical determinant of Rho guanine exchange factor function and cell phenotype.</title>
        <authorList>
            <person name="Liu M."/>
            <person name="Horowitz A."/>
        </authorList>
    </citation>
    <scope>INTERACTION WITH PLEKHG5</scope>
</reference>
<reference key="5">
    <citation type="journal article" date="2012" name="Nat. Commun.">
        <title>Quantitative maps of protein phosphorylation sites across 14 different rat organs and tissues.</title>
        <authorList>
            <person name="Lundby A."/>
            <person name="Secher A."/>
            <person name="Lage K."/>
            <person name="Nordsborg N.B."/>
            <person name="Dmytriyev A."/>
            <person name="Lundby C."/>
            <person name="Olsen J.V."/>
        </authorList>
    </citation>
    <scope>IDENTIFICATION BY MASS SPECTROMETRY [LARGE SCALE ANALYSIS]</scope>
</reference>
<proteinExistence type="evidence at protein level"/>
<name>GIPC1_RAT</name>
<evidence type="ECO:0000250" key="1"/>
<evidence type="ECO:0000250" key="2">
    <source>
        <dbReference type="UniProtKB" id="O14908"/>
    </source>
</evidence>
<evidence type="ECO:0000255" key="3">
    <source>
        <dbReference type="PROSITE-ProRule" id="PRU00143"/>
    </source>
</evidence>
<evidence type="ECO:0000256" key="4">
    <source>
        <dbReference type="SAM" id="MobiDB-lite"/>
    </source>
</evidence>
<evidence type="ECO:0000269" key="5">
    <source>
    </source>
</evidence>
<evidence type="ECO:0000269" key="6">
    <source>
    </source>
</evidence>
<evidence type="ECO:0000269" key="7">
    <source>
    </source>
</evidence>
<evidence type="ECO:0000305" key="8"/>
<sequence>MPLGLGRRKKAPPLVENEEAEPSRSGLGVGEPGPLGGSGAGESQMGLPPPPASLRPRLVFHTQLAHGSPTGRIEGFTNVKELYGKIAEAFRLPAAEVMFCTLNTHKVDMDKLLGGQIGLEDFIFAHVKGQRKEVEVFKSEDALGLTITDNGAGYAFIKRIKEGSVIDHIQLISVGDMIEAINGQSLLGCRHYEVARLLKELPRGRTFTLKLTEPRKAFDMISQRSSGGHPGSGPQLGTGRGTLRLRSRGPATVEDLPSAFEEKAIEKVDDLLESYMGIRDTELAATMVELGKDKRNPDELAEALDERLGDFAFPDEFVFDVWGAIGDAKVGRY</sequence>
<protein>
    <recommendedName>
        <fullName>PDZ domain-containing protein GIPC1</fullName>
    </recommendedName>
    <alternativeName>
        <fullName>GAIP C-terminus-interacting protein</fullName>
    </alternativeName>
    <alternativeName>
        <fullName>GLUT1 C-terminal-binding protein</fullName>
        <shortName>GLUT1CBP</shortName>
    </alternativeName>
    <alternativeName>
        <fullName>RGS-GAIP-interacting protein</fullName>
    </alternativeName>
    <alternativeName>
        <fullName>RGS19-interacting protein 1</fullName>
    </alternativeName>
    <alternativeName>
        <fullName>Synectin</fullName>
    </alternativeName>
</protein>